<comment type="function">
    <text evidence="1">Probably acts as a transcriptional activator. Mediates neuronal differentiation. Required for the regulation of amacrine cell fate specification in the retina (By similarity).</text>
</comment>
<comment type="subunit">
    <text evidence="1">Efficient DNA binding requires dimerization with another bHLH protein.</text>
</comment>
<comment type="interaction">
    <interactant intactId="EBI-3917781">
        <id>Q9HD90</id>
    </interactant>
    <interactant intactId="EBI-751857">
        <id>O15481</id>
        <label>MAGEB4</label>
    </interactant>
    <organismsDiffer>false</organismsDiffer>
    <experiments>5</experiments>
</comment>
<comment type="interaction">
    <interactant intactId="EBI-3917781">
        <id>Q9HD90</id>
    </interactant>
    <interactant intactId="EBI-714158">
        <id>Q13526</id>
        <label>PIN1</label>
    </interactant>
    <organismsDiffer>false</organismsDiffer>
    <experiments>3</experiments>
</comment>
<comment type="interaction">
    <interactant intactId="EBI-3917781">
        <id>Q9HD90</id>
    </interactant>
    <interactant intactId="EBI-13636688">
        <id>P15884-3</id>
        <label>TCF4</label>
    </interactant>
    <organismsDiffer>false</organismsDiffer>
    <experiments>3</experiments>
</comment>
<comment type="subcellular location">
    <subcellularLocation>
        <location evidence="2">Nucleus</location>
    </subcellularLocation>
</comment>
<comment type="PTM">
    <text evidence="1">Serine or threonine phosphorylation within the basic region may regulate neurogenic activity.</text>
</comment>
<gene>
    <name type="primary">NEUROD4</name>
    <name type="synonym">ATH3</name>
    <name type="synonym">ATOH3</name>
    <name type="synonym">BHLHA4</name>
</gene>
<proteinExistence type="evidence at protein level"/>
<keyword id="KW-0010">Activator</keyword>
<keyword id="KW-0217">Developmental protein</keyword>
<keyword id="KW-0221">Differentiation</keyword>
<keyword id="KW-0238">DNA-binding</keyword>
<keyword id="KW-0524">Neurogenesis</keyword>
<keyword id="KW-0539">Nucleus</keyword>
<keyword id="KW-0597">Phosphoprotein</keyword>
<keyword id="KW-1267">Proteomics identification</keyword>
<keyword id="KW-1185">Reference proteome</keyword>
<keyword id="KW-0804">Transcription</keyword>
<keyword id="KW-0805">Transcription regulation</keyword>
<evidence type="ECO:0000250" key="1"/>
<evidence type="ECO:0000255" key="2">
    <source>
        <dbReference type="PROSITE-ProRule" id="PRU00981"/>
    </source>
</evidence>
<evidence type="ECO:0000256" key="3">
    <source>
        <dbReference type="SAM" id="MobiDB-lite"/>
    </source>
</evidence>
<evidence type="ECO:0000269" key="4">
    <source>
    </source>
</evidence>
<evidence type="ECO:0000305" key="5"/>
<reference key="1">
    <citation type="journal article" date="2000" name="Diabetes">
        <title>Beta-cell transcription factors and diabetes: no evidence for diabetes-associated mutations in the gene encoding the basic helix-loop-helix transcription factor neurogenic differentiation 4 (NEUROD4) in Japanese patients with MODY.</title>
        <authorList>
            <person name="Horikawa Y."/>
            <person name="Horikawa Y."/>
            <person name="Cox N.J."/>
            <person name="Iwasaki N."/>
            <person name="Ogata M."/>
            <person name="Iwamoto Y."/>
            <person name="Schwitzgebel V."/>
            <person name="German M.S."/>
            <person name="Bell G.I."/>
        </authorList>
    </citation>
    <scope>NUCLEOTIDE SEQUENCE [GENOMIC DNA]</scope>
    <scope>VARIANT THR-68</scope>
</reference>
<reference key="2">
    <citation type="journal article" date="2004" name="Nat. Genet.">
        <title>Complete sequencing and characterization of 21,243 full-length human cDNAs.</title>
        <authorList>
            <person name="Ota T."/>
            <person name="Suzuki Y."/>
            <person name="Nishikawa T."/>
            <person name="Otsuki T."/>
            <person name="Sugiyama T."/>
            <person name="Irie R."/>
            <person name="Wakamatsu A."/>
            <person name="Hayashi K."/>
            <person name="Sato H."/>
            <person name="Nagai K."/>
            <person name="Kimura K."/>
            <person name="Makita H."/>
            <person name="Sekine M."/>
            <person name="Obayashi M."/>
            <person name="Nishi T."/>
            <person name="Shibahara T."/>
            <person name="Tanaka T."/>
            <person name="Ishii S."/>
            <person name="Yamamoto J."/>
            <person name="Saito K."/>
            <person name="Kawai Y."/>
            <person name="Isono Y."/>
            <person name="Nakamura Y."/>
            <person name="Nagahari K."/>
            <person name="Murakami K."/>
            <person name="Yasuda T."/>
            <person name="Iwayanagi T."/>
            <person name="Wagatsuma M."/>
            <person name="Shiratori A."/>
            <person name="Sudo H."/>
            <person name="Hosoiri T."/>
            <person name="Kaku Y."/>
            <person name="Kodaira H."/>
            <person name="Kondo H."/>
            <person name="Sugawara M."/>
            <person name="Takahashi M."/>
            <person name="Kanda K."/>
            <person name="Yokoi T."/>
            <person name="Furuya T."/>
            <person name="Kikkawa E."/>
            <person name="Omura Y."/>
            <person name="Abe K."/>
            <person name="Kamihara K."/>
            <person name="Katsuta N."/>
            <person name="Sato K."/>
            <person name="Tanikawa M."/>
            <person name="Yamazaki M."/>
            <person name="Ninomiya K."/>
            <person name="Ishibashi T."/>
            <person name="Yamashita H."/>
            <person name="Murakawa K."/>
            <person name="Fujimori K."/>
            <person name="Tanai H."/>
            <person name="Kimata M."/>
            <person name="Watanabe M."/>
            <person name="Hiraoka S."/>
            <person name="Chiba Y."/>
            <person name="Ishida S."/>
            <person name="Ono Y."/>
            <person name="Takiguchi S."/>
            <person name="Watanabe S."/>
            <person name="Yosida M."/>
            <person name="Hotuta T."/>
            <person name="Kusano J."/>
            <person name="Kanehori K."/>
            <person name="Takahashi-Fujii A."/>
            <person name="Hara H."/>
            <person name="Tanase T.-O."/>
            <person name="Nomura Y."/>
            <person name="Togiya S."/>
            <person name="Komai F."/>
            <person name="Hara R."/>
            <person name="Takeuchi K."/>
            <person name="Arita M."/>
            <person name="Imose N."/>
            <person name="Musashino K."/>
            <person name="Yuuki H."/>
            <person name="Oshima A."/>
            <person name="Sasaki N."/>
            <person name="Aotsuka S."/>
            <person name="Yoshikawa Y."/>
            <person name="Matsunawa H."/>
            <person name="Ichihara T."/>
            <person name="Shiohata N."/>
            <person name="Sano S."/>
            <person name="Moriya S."/>
            <person name="Momiyama H."/>
            <person name="Satoh N."/>
            <person name="Takami S."/>
            <person name="Terashima Y."/>
            <person name="Suzuki O."/>
            <person name="Nakagawa S."/>
            <person name="Senoh A."/>
            <person name="Mizoguchi H."/>
            <person name="Goto Y."/>
            <person name="Shimizu F."/>
            <person name="Wakebe H."/>
            <person name="Hishigaki H."/>
            <person name="Watanabe T."/>
            <person name="Sugiyama A."/>
            <person name="Takemoto M."/>
            <person name="Kawakami B."/>
            <person name="Yamazaki M."/>
            <person name="Watanabe K."/>
            <person name="Kumagai A."/>
            <person name="Itakura S."/>
            <person name="Fukuzumi Y."/>
            <person name="Fujimori Y."/>
            <person name="Komiyama M."/>
            <person name="Tashiro H."/>
            <person name="Tanigami A."/>
            <person name="Fujiwara T."/>
            <person name="Ono T."/>
            <person name="Yamada K."/>
            <person name="Fujii Y."/>
            <person name="Ozaki K."/>
            <person name="Hirao M."/>
            <person name="Ohmori Y."/>
            <person name="Kawabata A."/>
            <person name="Hikiji T."/>
            <person name="Kobatake N."/>
            <person name="Inagaki H."/>
            <person name="Ikema Y."/>
            <person name="Okamoto S."/>
            <person name="Okitani R."/>
            <person name="Kawakami T."/>
            <person name="Noguchi S."/>
            <person name="Itoh T."/>
            <person name="Shigeta K."/>
            <person name="Senba T."/>
            <person name="Matsumura K."/>
            <person name="Nakajima Y."/>
            <person name="Mizuno T."/>
            <person name="Morinaga M."/>
            <person name="Sasaki M."/>
            <person name="Togashi T."/>
            <person name="Oyama M."/>
            <person name="Hata H."/>
            <person name="Watanabe M."/>
            <person name="Komatsu T."/>
            <person name="Mizushima-Sugano J."/>
            <person name="Satoh T."/>
            <person name="Shirai Y."/>
            <person name="Takahashi Y."/>
            <person name="Nakagawa K."/>
            <person name="Okumura K."/>
            <person name="Nagase T."/>
            <person name="Nomura N."/>
            <person name="Kikuchi H."/>
            <person name="Masuho Y."/>
            <person name="Yamashita R."/>
            <person name="Nakai K."/>
            <person name="Yada T."/>
            <person name="Nakamura Y."/>
            <person name="Ohara O."/>
            <person name="Isogai T."/>
            <person name="Sugano S."/>
        </authorList>
    </citation>
    <scope>NUCLEOTIDE SEQUENCE [LARGE SCALE MRNA]</scope>
    <source>
        <tissue>Thalamus</tissue>
    </source>
</reference>
<reference key="3">
    <citation type="journal article" date="2006" name="Nature">
        <title>The finished DNA sequence of human chromosome 12.</title>
        <authorList>
            <person name="Scherer S.E."/>
            <person name="Muzny D.M."/>
            <person name="Buhay C.J."/>
            <person name="Chen R."/>
            <person name="Cree A."/>
            <person name="Ding Y."/>
            <person name="Dugan-Rocha S."/>
            <person name="Gill R."/>
            <person name="Gunaratne P."/>
            <person name="Harris R.A."/>
            <person name="Hawes A.C."/>
            <person name="Hernandez J."/>
            <person name="Hodgson A.V."/>
            <person name="Hume J."/>
            <person name="Jackson A."/>
            <person name="Khan Z.M."/>
            <person name="Kovar-Smith C."/>
            <person name="Lewis L.R."/>
            <person name="Lozado R.J."/>
            <person name="Metzker M.L."/>
            <person name="Milosavljevic A."/>
            <person name="Miner G.R."/>
            <person name="Montgomery K.T."/>
            <person name="Morgan M.B."/>
            <person name="Nazareth L.V."/>
            <person name="Scott G."/>
            <person name="Sodergren E."/>
            <person name="Song X.-Z."/>
            <person name="Steffen D."/>
            <person name="Lovering R.C."/>
            <person name="Wheeler D.A."/>
            <person name="Worley K.C."/>
            <person name="Yuan Y."/>
            <person name="Zhang Z."/>
            <person name="Adams C.Q."/>
            <person name="Ansari-Lari M.A."/>
            <person name="Ayele M."/>
            <person name="Brown M.J."/>
            <person name="Chen G."/>
            <person name="Chen Z."/>
            <person name="Clerc-Blankenburg K.P."/>
            <person name="Davis C."/>
            <person name="Delgado O."/>
            <person name="Dinh H.H."/>
            <person name="Draper H."/>
            <person name="Gonzalez-Garay M.L."/>
            <person name="Havlak P."/>
            <person name="Jackson L.R."/>
            <person name="Jacob L.S."/>
            <person name="Kelly S.H."/>
            <person name="Li L."/>
            <person name="Li Z."/>
            <person name="Liu J."/>
            <person name="Liu W."/>
            <person name="Lu J."/>
            <person name="Maheshwari M."/>
            <person name="Nguyen B.-V."/>
            <person name="Okwuonu G.O."/>
            <person name="Pasternak S."/>
            <person name="Perez L.M."/>
            <person name="Plopper F.J.H."/>
            <person name="Santibanez J."/>
            <person name="Shen H."/>
            <person name="Tabor P.E."/>
            <person name="Verduzco D."/>
            <person name="Waldron L."/>
            <person name="Wang Q."/>
            <person name="Williams G.A."/>
            <person name="Zhang J."/>
            <person name="Zhou J."/>
            <person name="Allen C.C."/>
            <person name="Amin A.G."/>
            <person name="Anyalebechi V."/>
            <person name="Bailey M."/>
            <person name="Barbaria J.A."/>
            <person name="Bimage K.E."/>
            <person name="Bryant N.P."/>
            <person name="Burch P.E."/>
            <person name="Burkett C.E."/>
            <person name="Burrell K.L."/>
            <person name="Calderon E."/>
            <person name="Cardenas V."/>
            <person name="Carter K."/>
            <person name="Casias K."/>
            <person name="Cavazos I."/>
            <person name="Cavazos S.R."/>
            <person name="Ceasar H."/>
            <person name="Chacko J."/>
            <person name="Chan S.N."/>
            <person name="Chavez D."/>
            <person name="Christopoulos C."/>
            <person name="Chu J."/>
            <person name="Cockrell R."/>
            <person name="Cox C.D."/>
            <person name="Dang M."/>
            <person name="Dathorne S.R."/>
            <person name="David R."/>
            <person name="Davis C.M."/>
            <person name="Davy-Carroll L."/>
            <person name="Deshazo D.R."/>
            <person name="Donlin J.E."/>
            <person name="D'Souza L."/>
            <person name="Eaves K.A."/>
            <person name="Egan A."/>
            <person name="Emery-Cohen A.J."/>
            <person name="Escotto M."/>
            <person name="Flagg N."/>
            <person name="Forbes L.D."/>
            <person name="Gabisi A.M."/>
            <person name="Garza M."/>
            <person name="Hamilton C."/>
            <person name="Henderson N."/>
            <person name="Hernandez O."/>
            <person name="Hines S."/>
            <person name="Hogues M.E."/>
            <person name="Huang M."/>
            <person name="Idlebird D.G."/>
            <person name="Johnson R."/>
            <person name="Jolivet A."/>
            <person name="Jones S."/>
            <person name="Kagan R."/>
            <person name="King L.M."/>
            <person name="Leal B."/>
            <person name="Lebow H."/>
            <person name="Lee S."/>
            <person name="LeVan J.M."/>
            <person name="Lewis L.C."/>
            <person name="London P."/>
            <person name="Lorensuhewa L.M."/>
            <person name="Loulseged H."/>
            <person name="Lovett D.A."/>
            <person name="Lucier A."/>
            <person name="Lucier R.L."/>
            <person name="Ma J."/>
            <person name="Madu R.C."/>
            <person name="Mapua P."/>
            <person name="Martindale A.D."/>
            <person name="Martinez E."/>
            <person name="Massey E."/>
            <person name="Mawhiney S."/>
            <person name="Meador M.G."/>
            <person name="Mendez S."/>
            <person name="Mercado C."/>
            <person name="Mercado I.C."/>
            <person name="Merritt C.E."/>
            <person name="Miner Z.L."/>
            <person name="Minja E."/>
            <person name="Mitchell T."/>
            <person name="Mohabbat F."/>
            <person name="Mohabbat K."/>
            <person name="Montgomery B."/>
            <person name="Moore N."/>
            <person name="Morris S."/>
            <person name="Munidasa M."/>
            <person name="Ngo R.N."/>
            <person name="Nguyen N.B."/>
            <person name="Nickerson E."/>
            <person name="Nwaokelemeh O.O."/>
            <person name="Nwokenkwo S."/>
            <person name="Obregon M."/>
            <person name="Oguh M."/>
            <person name="Oragunye N."/>
            <person name="Oviedo R.J."/>
            <person name="Parish B.J."/>
            <person name="Parker D.N."/>
            <person name="Parrish J."/>
            <person name="Parks K.L."/>
            <person name="Paul H.A."/>
            <person name="Payton B.A."/>
            <person name="Perez A."/>
            <person name="Perrin W."/>
            <person name="Pickens A."/>
            <person name="Primus E.L."/>
            <person name="Pu L.-L."/>
            <person name="Puazo M."/>
            <person name="Quiles M.M."/>
            <person name="Quiroz J.B."/>
            <person name="Rabata D."/>
            <person name="Reeves K."/>
            <person name="Ruiz S.J."/>
            <person name="Shao H."/>
            <person name="Sisson I."/>
            <person name="Sonaike T."/>
            <person name="Sorelle R.P."/>
            <person name="Sutton A.E."/>
            <person name="Svatek A.F."/>
            <person name="Svetz L.A."/>
            <person name="Tamerisa K.S."/>
            <person name="Taylor T.R."/>
            <person name="Teague B."/>
            <person name="Thomas N."/>
            <person name="Thorn R.D."/>
            <person name="Trejos Z.Y."/>
            <person name="Trevino B.K."/>
            <person name="Ukegbu O.N."/>
            <person name="Urban J.B."/>
            <person name="Vasquez L.I."/>
            <person name="Vera V.A."/>
            <person name="Villasana D.M."/>
            <person name="Wang L."/>
            <person name="Ward-Moore S."/>
            <person name="Warren J.T."/>
            <person name="Wei X."/>
            <person name="White F."/>
            <person name="Williamson A.L."/>
            <person name="Wleczyk R."/>
            <person name="Wooden H.S."/>
            <person name="Wooden S.H."/>
            <person name="Yen J."/>
            <person name="Yoon L."/>
            <person name="Yoon V."/>
            <person name="Zorrilla S.E."/>
            <person name="Nelson D."/>
            <person name="Kucherlapati R."/>
            <person name="Weinstock G."/>
            <person name="Gibbs R.A."/>
        </authorList>
    </citation>
    <scope>NUCLEOTIDE SEQUENCE [LARGE SCALE GENOMIC DNA]</scope>
</reference>
<reference key="4">
    <citation type="submission" date="2005-07" db="EMBL/GenBank/DDBJ databases">
        <authorList>
            <person name="Mural R.J."/>
            <person name="Istrail S."/>
            <person name="Sutton G.G."/>
            <person name="Florea L."/>
            <person name="Halpern A.L."/>
            <person name="Mobarry C.M."/>
            <person name="Lippert R."/>
            <person name="Walenz B."/>
            <person name="Shatkay H."/>
            <person name="Dew I."/>
            <person name="Miller J.R."/>
            <person name="Flanigan M.J."/>
            <person name="Edwards N.J."/>
            <person name="Bolanos R."/>
            <person name="Fasulo D."/>
            <person name="Halldorsson B.V."/>
            <person name="Hannenhalli S."/>
            <person name="Turner R."/>
            <person name="Yooseph S."/>
            <person name="Lu F."/>
            <person name="Nusskern D.R."/>
            <person name="Shue B.C."/>
            <person name="Zheng X.H."/>
            <person name="Zhong F."/>
            <person name="Delcher A.L."/>
            <person name="Huson D.H."/>
            <person name="Kravitz S.A."/>
            <person name="Mouchard L."/>
            <person name="Reinert K."/>
            <person name="Remington K.A."/>
            <person name="Clark A.G."/>
            <person name="Waterman M.S."/>
            <person name="Eichler E.E."/>
            <person name="Adams M.D."/>
            <person name="Hunkapiller M.W."/>
            <person name="Myers E.W."/>
            <person name="Venter J.C."/>
        </authorList>
    </citation>
    <scope>NUCLEOTIDE SEQUENCE [LARGE SCALE GENOMIC DNA]</scope>
</reference>
<name>NDF4_HUMAN</name>
<feature type="chain" id="PRO_0000127390" description="Neurogenic differentiation factor 4">
    <location>
        <begin position="1"/>
        <end position="331"/>
    </location>
</feature>
<feature type="domain" description="bHLH" evidence="2">
    <location>
        <begin position="87"/>
        <end position="139"/>
    </location>
</feature>
<feature type="region of interest" description="Disordered" evidence="3">
    <location>
        <begin position="1"/>
        <end position="80"/>
    </location>
</feature>
<feature type="region of interest" description="Disordered" evidence="3">
    <location>
        <begin position="246"/>
        <end position="265"/>
    </location>
</feature>
<feature type="compositionally biased region" description="Acidic residues" evidence="3">
    <location>
        <begin position="52"/>
        <end position="64"/>
    </location>
</feature>
<feature type="compositionally biased region" description="Basic residues" evidence="3">
    <location>
        <begin position="67"/>
        <end position="79"/>
    </location>
</feature>
<feature type="sequence variant" id="VAR_012979" description="In dbSNP:rs76064726." evidence="4">
    <original>K</original>
    <variation>T</variation>
    <location>
        <position position="68"/>
    </location>
</feature>
<feature type="sequence conflict" description="In Ref. 1; AAF99097." evidence="5" ref="1">
    <original>D</original>
    <variation>G</variation>
    <location>
        <position position="194"/>
    </location>
</feature>
<protein>
    <recommendedName>
        <fullName>Neurogenic differentiation factor 4</fullName>
        <shortName>NeuroD4</shortName>
    </recommendedName>
    <alternativeName>
        <fullName>Class A basic helix-loop-helix protein 4</fullName>
        <shortName>bHLHa4</shortName>
    </alternativeName>
    <alternativeName>
        <fullName>Protein atonal homolog 3</fullName>
        <shortName>ATH-3</shortName>
        <shortName>Atoh3</shortName>
    </alternativeName>
</protein>
<accession>Q9HD90</accession>
<accession>B2RAC9</accession>
<organism>
    <name type="scientific">Homo sapiens</name>
    <name type="common">Human</name>
    <dbReference type="NCBI Taxonomy" id="9606"/>
    <lineage>
        <taxon>Eukaryota</taxon>
        <taxon>Metazoa</taxon>
        <taxon>Chordata</taxon>
        <taxon>Craniata</taxon>
        <taxon>Vertebrata</taxon>
        <taxon>Euteleostomi</taxon>
        <taxon>Mammalia</taxon>
        <taxon>Eutheria</taxon>
        <taxon>Euarchontoglires</taxon>
        <taxon>Primates</taxon>
        <taxon>Haplorrhini</taxon>
        <taxon>Catarrhini</taxon>
        <taxon>Hominidae</taxon>
        <taxon>Homo</taxon>
    </lineage>
</organism>
<sequence>MSKTFVKSKEMGELVNTPSWMDKGLGSQNEVKEEESRPGTYGMLSSLTEEHDSIEEEEEEEEDGEKPKRRGPKKKKMTKARLERFRARRVKANARERTRMHGLNDALDNLRRVMPCYSKTQKLSKIETLRLARNYIWALSEVLETGQTPEGKGFVEMLCKGLSQPTSNLVAGCLQLGPQSVLLEKHEDKSPICDSAISVHNFNYQSPGLPSPPYGHMETHLLHLKPQVFKSLGESSFGSHLPDCSTPPYEGPLTPPLSISGNFSLKQDGSPDLEKSYSFMPHYPSSSLSSGHVHSTPFQAGTPRYDVPIDMSYDSYPHHGIGTQLNTVFTE</sequence>
<dbReference type="EMBL" id="AF203901">
    <property type="protein sequence ID" value="AAF99097.1"/>
    <property type="molecule type" value="Genomic_DNA"/>
</dbReference>
<dbReference type="EMBL" id="AK314136">
    <property type="protein sequence ID" value="BAG36826.1"/>
    <property type="molecule type" value="mRNA"/>
</dbReference>
<dbReference type="EMBL" id="AC027287">
    <property type="status" value="NOT_ANNOTATED_CDS"/>
    <property type="molecule type" value="Genomic_DNA"/>
</dbReference>
<dbReference type="EMBL" id="CH471054">
    <property type="protein sequence ID" value="EAW96803.1"/>
    <property type="molecule type" value="Genomic_DNA"/>
</dbReference>
<dbReference type="CCDS" id="CCDS8886.1"/>
<dbReference type="RefSeq" id="NP_067014.2">
    <property type="nucleotide sequence ID" value="NM_021191.3"/>
</dbReference>
<dbReference type="SMR" id="Q9HD90"/>
<dbReference type="BioGRID" id="121799">
    <property type="interactions" value="23"/>
</dbReference>
<dbReference type="FunCoup" id="Q9HD90">
    <property type="interactions" value="1273"/>
</dbReference>
<dbReference type="IntAct" id="Q9HD90">
    <property type="interactions" value="10"/>
</dbReference>
<dbReference type="STRING" id="9606.ENSP00000242994"/>
<dbReference type="GlyGen" id="Q9HD90">
    <property type="glycosylation" value="3 sites, 1 O-linked glycan (3 sites)"/>
</dbReference>
<dbReference type="iPTMnet" id="Q9HD90"/>
<dbReference type="PhosphoSitePlus" id="Q9HD90"/>
<dbReference type="BioMuta" id="NEUROD4"/>
<dbReference type="DMDM" id="296439241"/>
<dbReference type="MassIVE" id="Q9HD90"/>
<dbReference type="PaxDb" id="9606-ENSP00000242994"/>
<dbReference type="PeptideAtlas" id="Q9HD90"/>
<dbReference type="ProteomicsDB" id="81843"/>
<dbReference type="Antibodypedia" id="15429">
    <property type="antibodies" value="83 antibodies from 22 providers"/>
</dbReference>
<dbReference type="DNASU" id="58158"/>
<dbReference type="Ensembl" id="ENST00000242994.4">
    <property type="protein sequence ID" value="ENSP00000242994.3"/>
    <property type="gene ID" value="ENSG00000123307.4"/>
</dbReference>
<dbReference type="GeneID" id="58158"/>
<dbReference type="KEGG" id="hsa:58158"/>
<dbReference type="MANE-Select" id="ENST00000242994.4">
    <property type="protein sequence ID" value="ENSP00000242994.3"/>
    <property type="RefSeq nucleotide sequence ID" value="NM_021191.3"/>
    <property type="RefSeq protein sequence ID" value="NP_067014.2"/>
</dbReference>
<dbReference type="UCSC" id="uc001sgp.5">
    <property type="organism name" value="human"/>
</dbReference>
<dbReference type="AGR" id="HGNC:13802"/>
<dbReference type="CTD" id="58158"/>
<dbReference type="DisGeNET" id="58158"/>
<dbReference type="GeneCards" id="NEUROD4"/>
<dbReference type="HGNC" id="HGNC:13802">
    <property type="gene designation" value="NEUROD4"/>
</dbReference>
<dbReference type="HPA" id="ENSG00000123307">
    <property type="expression patterns" value="Group enriched (pituitary gland, retina)"/>
</dbReference>
<dbReference type="MIM" id="611635">
    <property type="type" value="gene"/>
</dbReference>
<dbReference type="neXtProt" id="NX_Q9HD90"/>
<dbReference type="OpenTargets" id="ENSG00000123307"/>
<dbReference type="PharmGKB" id="PA31566"/>
<dbReference type="VEuPathDB" id="HostDB:ENSG00000123307"/>
<dbReference type="eggNOG" id="KOG3898">
    <property type="taxonomic scope" value="Eukaryota"/>
</dbReference>
<dbReference type="GeneTree" id="ENSGT00940000160217"/>
<dbReference type="HOGENOM" id="CLU_055134_0_0_1"/>
<dbReference type="InParanoid" id="Q9HD90"/>
<dbReference type="OMA" id="TFMAHYP"/>
<dbReference type="OrthoDB" id="10039134at2759"/>
<dbReference type="PAN-GO" id="Q9HD90">
    <property type="GO annotations" value="5 GO annotations based on evolutionary models"/>
</dbReference>
<dbReference type="PhylomeDB" id="Q9HD90"/>
<dbReference type="TreeFam" id="TF315153"/>
<dbReference type="PathwayCommons" id="Q9HD90"/>
<dbReference type="SignaLink" id="Q9HD90"/>
<dbReference type="SIGNOR" id="Q9HD90"/>
<dbReference type="BioGRID-ORCS" id="58158">
    <property type="hits" value="7 hits in 1161 CRISPR screens"/>
</dbReference>
<dbReference type="GenomeRNAi" id="58158"/>
<dbReference type="Pharos" id="Q9HD90">
    <property type="development level" value="Tbio"/>
</dbReference>
<dbReference type="PRO" id="PR:Q9HD90"/>
<dbReference type="Proteomes" id="UP000005640">
    <property type="component" value="Chromosome 12"/>
</dbReference>
<dbReference type="RNAct" id="Q9HD90">
    <property type="molecule type" value="protein"/>
</dbReference>
<dbReference type="Bgee" id="ENSG00000123307">
    <property type="expression patterns" value="Expressed in ganglionic eminence and 15 other cell types or tissues"/>
</dbReference>
<dbReference type="GO" id="GO:0000785">
    <property type="term" value="C:chromatin"/>
    <property type="evidence" value="ECO:0000247"/>
    <property type="project" value="NTNU_SB"/>
</dbReference>
<dbReference type="GO" id="GO:0005634">
    <property type="term" value="C:nucleus"/>
    <property type="evidence" value="ECO:0000318"/>
    <property type="project" value="GO_Central"/>
</dbReference>
<dbReference type="GO" id="GO:0000981">
    <property type="term" value="F:DNA-binding transcription factor activity, RNA polymerase II-specific"/>
    <property type="evidence" value="ECO:0000247"/>
    <property type="project" value="NTNU_SB"/>
</dbReference>
<dbReference type="GO" id="GO:0070888">
    <property type="term" value="F:E-box binding"/>
    <property type="evidence" value="ECO:0000318"/>
    <property type="project" value="GO_Central"/>
</dbReference>
<dbReference type="GO" id="GO:0046983">
    <property type="term" value="F:protein dimerization activity"/>
    <property type="evidence" value="ECO:0007669"/>
    <property type="project" value="InterPro"/>
</dbReference>
<dbReference type="GO" id="GO:0035881">
    <property type="term" value="P:amacrine cell differentiation"/>
    <property type="evidence" value="ECO:0000250"/>
    <property type="project" value="UniProtKB"/>
</dbReference>
<dbReference type="GO" id="GO:0061564">
    <property type="term" value="P:axon development"/>
    <property type="evidence" value="ECO:0000318"/>
    <property type="project" value="GO_Central"/>
</dbReference>
<dbReference type="GO" id="GO:0043010">
    <property type="term" value="P:camera-type eye development"/>
    <property type="evidence" value="ECO:0000318"/>
    <property type="project" value="GO_Central"/>
</dbReference>
<dbReference type="GO" id="GO:0045165">
    <property type="term" value="P:cell fate commitment"/>
    <property type="evidence" value="ECO:0007669"/>
    <property type="project" value="Ensembl"/>
</dbReference>
<dbReference type="GO" id="GO:0097475">
    <property type="term" value="P:motor neuron migration"/>
    <property type="evidence" value="ECO:0007669"/>
    <property type="project" value="Ensembl"/>
</dbReference>
<dbReference type="GO" id="GO:0007405">
    <property type="term" value="P:neuroblast proliferation"/>
    <property type="evidence" value="ECO:0007669"/>
    <property type="project" value="Ensembl"/>
</dbReference>
<dbReference type="GO" id="GO:0007219">
    <property type="term" value="P:Notch signaling pathway"/>
    <property type="evidence" value="ECO:0007669"/>
    <property type="project" value="Ensembl"/>
</dbReference>
<dbReference type="GO" id="GO:0048709">
    <property type="term" value="P:oligodendrocyte differentiation"/>
    <property type="evidence" value="ECO:0007669"/>
    <property type="project" value="Ensembl"/>
</dbReference>
<dbReference type="GO" id="GO:0045597">
    <property type="term" value="P:positive regulation of cell differentiation"/>
    <property type="evidence" value="ECO:0000250"/>
    <property type="project" value="UniProtKB"/>
</dbReference>
<dbReference type="GO" id="GO:0045944">
    <property type="term" value="P:positive regulation of transcription by RNA polymerase II"/>
    <property type="evidence" value="ECO:0000318"/>
    <property type="project" value="GO_Central"/>
</dbReference>
<dbReference type="CDD" id="cd19721">
    <property type="entry name" value="bHLH_TS_NeuroD4_ATOH3"/>
    <property type="match status" value="1"/>
</dbReference>
<dbReference type="FunFam" id="4.10.280.10:FF:000006">
    <property type="entry name" value="Neurogenic differentiation factor"/>
    <property type="match status" value="1"/>
</dbReference>
<dbReference type="Gene3D" id="4.10.280.10">
    <property type="entry name" value="Helix-loop-helix DNA-binding domain"/>
    <property type="match status" value="1"/>
</dbReference>
<dbReference type="InterPro" id="IPR011598">
    <property type="entry name" value="bHLH_dom"/>
</dbReference>
<dbReference type="InterPro" id="IPR050359">
    <property type="entry name" value="bHLH_transcription_factors"/>
</dbReference>
<dbReference type="InterPro" id="IPR036638">
    <property type="entry name" value="HLH_DNA-bd_sf"/>
</dbReference>
<dbReference type="InterPro" id="IPR022575">
    <property type="entry name" value="NeuroD_DUF"/>
</dbReference>
<dbReference type="InterPro" id="IPR016637">
    <property type="entry name" value="TF_bHLH_NeuroD"/>
</dbReference>
<dbReference type="PANTHER" id="PTHR19290">
    <property type="entry name" value="BASIC HELIX-LOOP-HELIX PROTEIN NEUROGENIN-RELATED"/>
    <property type="match status" value="1"/>
</dbReference>
<dbReference type="PANTHER" id="PTHR19290:SF86">
    <property type="entry name" value="NEUROGENIC DIFFERENTIATION FACTOR 4"/>
    <property type="match status" value="1"/>
</dbReference>
<dbReference type="Pfam" id="PF00010">
    <property type="entry name" value="HLH"/>
    <property type="match status" value="1"/>
</dbReference>
<dbReference type="Pfam" id="PF12533">
    <property type="entry name" value="Neuro_bHLH"/>
    <property type="match status" value="1"/>
</dbReference>
<dbReference type="PIRSF" id="PIRSF015618">
    <property type="entry name" value="bHLH_NeuroD"/>
    <property type="match status" value="1"/>
</dbReference>
<dbReference type="SMART" id="SM00353">
    <property type="entry name" value="HLH"/>
    <property type="match status" value="1"/>
</dbReference>
<dbReference type="SUPFAM" id="SSF47459">
    <property type="entry name" value="HLH, helix-loop-helix DNA-binding domain"/>
    <property type="match status" value="1"/>
</dbReference>
<dbReference type="PROSITE" id="PS50888">
    <property type="entry name" value="BHLH"/>
    <property type="match status" value="1"/>
</dbReference>